<dbReference type="EMBL" id="U18997">
    <property type="protein sequence ID" value="AAA57957.1"/>
    <property type="molecule type" value="Genomic_DNA"/>
</dbReference>
<dbReference type="EMBL" id="U00096">
    <property type="protein sequence ID" value="AAC76188.1"/>
    <property type="molecule type" value="Genomic_DNA"/>
</dbReference>
<dbReference type="EMBL" id="AP009048">
    <property type="protein sequence ID" value="BAE77200.1"/>
    <property type="molecule type" value="Genomic_DNA"/>
</dbReference>
<dbReference type="PIR" id="F65105">
    <property type="entry name" value="F65105"/>
</dbReference>
<dbReference type="RefSeq" id="NP_417623.1">
    <property type="nucleotide sequence ID" value="NC_000913.3"/>
</dbReference>
<dbReference type="RefSeq" id="WP_000449030.1">
    <property type="nucleotide sequence ID" value="NZ_STEB01000012.1"/>
</dbReference>
<dbReference type="SMR" id="P67762"/>
<dbReference type="BioGRID" id="4259271">
    <property type="interactions" value="19"/>
</dbReference>
<dbReference type="DIP" id="DIP-48097N"/>
<dbReference type="FunCoup" id="P67762">
    <property type="interactions" value="93"/>
</dbReference>
<dbReference type="IntAct" id="P67762">
    <property type="interactions" value="6"/>
</dbReference>
<dbReference type="STRING" id="511145.b3154"/>
<dbReference type="jPOST" id="P67762"/>
<dbReference type="PaxDb" id="511145-b3154"/>
<dbReference type="EnsemblBacteria" id="AAC76188">
    <property type="protein sequence ID" value="AAC76188"/>
    <property type="gene ID" value="b3154"/>
</dbReference>
<dbReference type="GeneID" id="947665"/>
<dbReference type="KEGG" id="ecj:JW3123"/>
<dbReference type="KEGG" id="eco:b3154"/>
<dbReference type="KEGG" id="ecoc:C3026_17180"/>
<dbReference type="PATRIC" id="fig|511145.12.peg.3249"/>
<dbReference type="EchoBASE" id="EB2638"/>
<dbReference type="eggNOG" id="COG3787">
    <property type="taxonomic scope" value="Bacteria"/>
</dbReference>
<dbReference type="HOGENOM" id="CLU_105087_3_0_6"/>
<dbReference type="InParanoid" id="P67762"/>
<dbReference type="OMA" id="DLWCANC"/>
<dbReference type="OrthoDB" id="8447155at2"/>
<dbReference type="PhylomeDB" id="P67762"/>
<dbReference type="BioCyc" id="EcoCyc:G7648-MONOMER"/>
<dbReference type="PRO" id="PR:P67762"/>
<dbReference type="Proteomes" id="UP000000625">
    <property type="component" value="Chromosome"/>
</dbReference>
<dbReference type="GO" id="GO:0005829">
    <property type="term" value="C:cytosol"/>
    <property type="evidence" value="ECO:0000314"/>
    <property type="project" value="EcoCyc"/>
</dbReference>
<dbReference type="FunFam" id="2.30.110.10:FF:000003">
    <property type="entry name" value="UPF0306 protein YhbP"/>
    <property type="match status" value="1"/>
</dbReference>
<dbReference type="Gene3D" id="2.30.110.10">
    <property type="entry name" value="Electron Transport, Fmn-binding Protein, Chain A"/>
    <property type="match status" value="1"/>
</dbReference>
<dbReference type="HAMAP" id="MF_00764">
    <property type="entry name" value="UPF0306"/>
    <property type="match status" value="1"/>
</dbReference>
<dbReference type="InterPro" id="IPR012349">
    <property type="entry name" value="Split_barrel_FMN-bd"/>
</dbReference>
<dbReference type="InterPro" id="IPR011194">
    <property type="entry name" value="UPF0306"/>
</dbReference>
<dbReference type="NCBIfam" id="NF002900">
    <property type="entry name" value="PRK03467.1"/>
    <property type="match status" value="1"/>
</dbReference>
<dbReference type="PIRSF" id="PIRSF009554">
    <property type="entry name" value="UCP009554"/>
    <property type="match status" value="1"/>
</dbReference>
<dbReference type="SUPFAM" id="SSF50475">
    <property type="entry name" value="FMN-binding split barrel"/>
    <property type="match status" value="1"/>
</dbReference>
<gene>
    <name type="primary">yhbP</name>
    <name type="ordered locus">b3154</name>
    <name type="ordered locus">JW3123</name>
</gene>
<keyword id="KW-1185">Reference proteome</keyword>
<reference key="1">
    <citation type="journal article" date="1997" name="Science">
        <title>The complete genome sequence of Escherichia coli K-12.</title>
        <authorList>
            <person name="Blattner F.R."/>
            <person name="Plunkett G. III"/>
            <person name="Bloch C.A."/>
            <person name="Perna N.T."/>
            <person name="Burland V."/>
            <person name="Riley M."/>
            <person name="Collado-Vides J."/>
            <person name="Glasner J.D."/>
            <person name="Rode C.K."/>
            <person name="Mayhew G.F."/>
            <person name="Gregor J."/>
            <person name="Davis N.W."/>
            <person name="Kirkpatrick H.A."/>
            <person name="Goeden M.A."/>
            <person name="Rose D.J."/>
            <person name="Mau B."/>
            <person name="Shao Y."/>
        </authorList>
    </citation>
    <scope>NUCLEOTIDE SEQUENCE [LARGE SCALE GENOMIC DNA]</scope>
    <source>
        <strain>K12 / MG1655 / ATCC 47076</strain>
    </source>
</reference>
<reference key="2">
    <citation type="journal article" date="2006" name="Mol. Syst. Biol.">
        <title>Highly accurate genome sequences of Escherichia coli K-12 strains MG1655 and W3110.</title>
        <authorList>
            <person name="Hayashi K."/>
            <person name="Morooka N."/>
            <person name="Yamamoto Y."/>
            <person name="Fujita K."/>
            <person name="Isono K."/>
            <person name="Choi S."/>
            <person name="Ohtsubo E."/>
            <person name="Baba T."/>
            <person name="Wanner B.L."/>
            <person name="Mori H."/>
            <person name="Horiuchi T."/>
        </authorList>
    </citation>
    <scope>NUCLEOTIDE SEQUENCE [LARGE SCALE GENOMIC DNA]</scope>
    <source>
        <strain>K12 / W3110 / ATCC 27325 / DSM 5911</strain>
    </source>
</reference>
<sequence>METLIAISRWLAKQHVVTWCVQQEGELWCANAFYLFDAQKVAFYILTEEKTRHAQMSGPQAAVAGTVNGQPKTVALIRGVQFKGEIRRLEGEESDLARKAYNRRFPVARMLSAPVWEIRLDEIKFTDNTLGFGKKMIWLRDSGTEQA</sequence>
<organism>
    <name type="scientific">Escherichia coli (strain K12)</name>
    <dbReference type="NCBI Taxonomy" id="83333"/>
    <lineage>
        <taxon>Bacteria</taxon>
        <taxon>Pseudomonadati</taxon>
        <taxon>Pseudomonadota</taxon>
        <taxon>Gammaproteobacteria</taxon>
        <taxon>Enterobacterales</taxon>
        <taxon>Enterobacteriaceae</taxon>
        <taxon>Escherichia</taxon>
    </lineage>
</organism>
<protein>
    <recommendedName>
        <fullName>UPF0306 protein YhbP</fullName>
    </recommendedName>
</protein>
<feature type="chain" id="PRO_0000214865" description="UPF0306 protein YhbP">
    <location>
        <begin position="1"/>
        <end position="147"/>
    </location>
</feature>
<accession>P67762</accession>
<accession>P45471</accession>
<accession>Q2M956</accession>
<comment type="similarity">
    <text evidence="1">Belongs to the UPF0306 family.</text>
</comment>
<evidence type="ECO:0000305" key="1"/>
<name>YHBP_ECOLI</name>
<proteinExistence type="inferred from homology"/>